<comment type="function">
    <text evidence="2">Component of the ubiquinol-cytochrome c reductase complex (complex III or cytochrome b-c1 complex) that is part of the mitochondrial respiratory chain. The b-c1 complex mediates electron transfer from ubiquinol to cytochrome c. Contributes to the generation of a proton gradient across the mitochondrial membrane that is then used for ATP synthesis.</text>
</comment>
<comment type="cofactor">
    <cofactor evidence="2">
        <name>heme b</name>
        <dbReference type="ChEBI" id="CHEBI:60344"/>
    </cofactor>
    <text evidence="2">Binds 2 heme b groups non-covalently.</text>
</comment>
<comment type="subunit">
    <text evidence="2">The cytochrome bc1 complex contains 11 subunits: 3 respiratory subunits (MT-CYB, CYC1 and UQCRFS1), 2 core proteins (UQCRC1 and UQCRC2) and 6 low-molecular weight proteins (UQCRH/QCR6, UQCRB/QCR7, UQCRQ/QCR8, UQCR10/QCR9, UQCR11/QCR10 and a cleavage product of UQCRFS1). This cytochrome bc1 complex then forms a dimer.</text>
</comment>
<comment type="subcellular location">
    <subcellularLocation>
        <location evidence="2">Mitochondrion inner membrane</location>
        <topology evidence="2">Multi-pass membrane protein</topology>
    </subcellularLocation>
</comment>
<comment type="miscellaneous">
    <text evidence="1">Heme 1 (or BL or b562) is low-potential and absorbs at about 562 nm, and heme 2 (or BH or b566) is high-potential and absorbs at about 566 nm.</text>
</comment>
<comment type="similarity">
    <text evidence="3 4">Belongs to the cytochrome b family.</text>
</comment>
<comment type="caution">
    <text evidence="2">The full-length protein contains only eight transmembrane helices, not nine as predicted by bioinformatics tools.</text>
</comment>
<evidence type="ECO:0000250" key="1"/>
<evidence type="ECO:0000250" key="2">
    <source>
        <dbReference type="UniProtKB" id="P00157"/>
    </source>
</evidence>
<evidence type="ECO:0000255" key="3">
    <source>
        <dbReference type="PROSITE-ProRule" id="PRU00967"/>
    </source>
</evidence>
<evidence type="ECO:0000255" key="4">
    <source>
        <dbReference type="PROSITE-ProRule" id="PRU00968"/>
    </source>
</evidence>
<sequence length="379" mass="42549">MTNIRKMHPLAKIINNSLIDLPAPSNISAWWNFGSLLAVCLALQILTGLFLAMHYTSDTTTAFSSVTHICRDVNYGWIIRYMHANGASMFFICLYMHVGRGLYYGSYTLMETWNIGIILLFTIMATAFMGYVLPWGQMSFWGATVITNLLSAVPYIGTNLVEWIWGGFSVDKATLTRFFAFHFILPFVASALVMVHLLFLHETGSNNPSGVSSDSDKIPFHPYYTIKDILGALLLILILMLLVMFSPDLLGDPDNYTPANPLSTPPHIKPEWYFLFAYAILRSIPNKLGGVLALLLSILTLAVIPLLHTSKQRGMMFRPISQFLFWLLVADLLTLTWIGGQPVEHPFIAIGQLASILYFTILLILMPIAGIIENYILKW</sequence>
<organism>
    <name type="scientific">Arctocephalus forsteri</name>
    <name type="common">New Zealand fur seal</name>
    <name type="synonym">Arctocephalus australis forsteri</name>
    <dbReference type="NCBI Taxonomy" id="29084"/>
    <lineage>
        <taxon>Eukaryota</taxon>
        <taxon>Metazoa</taxon>
        <taxon>Chordata</taxon>
        <taxon>Craniata</taxon>
        <taxon>Vertebrata</taxon>
        <taxon>Euteleostomi</taxon>
        <taxon>Mammalia</taxon>
        <taxon>Eutheria</taxon>
        <taxon>Laurasiatheria</taxon>
        <taxon>Carnivora</taxon>
        <taxon>Caniformia</taxon>
        <taxon>Pinnipedia</taxon>
        <taxon>Otariidae</taxon>
        <taxon>Arctocephalus</taxon>
    </lineage>
</organism>
<name>CYB_ARCFO</name>
<gene>
    <name type="primary">MT-CYB</name>
    <name type="synonym">COB</name>
    <name type="synonym">CYTB</name>
    <name type="synonym">MTCYB</name>
</gene>
<reference key="1">
    <citation type="journal article" date="1995" name="J. Mol. Evol.">
        <title>A molecular view of pinniped relationships with particular emphasis on the true seals.</title>
        <authorList>
            <person name="Arnason U."/>
            <person name="Bodin K."/>
            <person name="Gullberg A."/>
            <person name="Ledje C."/>
            <person name="Mouchaty S."/>
        </authorList>
    </citation>
    <scope>NUCLEOTIDE SEQUENCE [GENOMIC DNA]</scope>
</reference>
<dbReference type="EMBL" id="X82293">
    <property type="protein sequence ID" value="CAA57736.1"/>
    <property type="molecule type" value="Genomic_DNA"/>
</dbReference>
<dbReference type="PIR" id="S58459">
    <property type="entry name" value="S58459"/>
</dbReference>
<dbReference type="SMR" id="Q33697"/>
<dbReference type="GO" id="GO:0005743">
    <property type="term" value="C:mitochondrial inner membrane"/>
    <property type="evidence" value="ECO:0007669"/>
    <property type="project" value="UniProtKB-SubCell"/>
</dbReference>
<dbReference type="GO" id="GO:0045275">
    <property type="term" value="C:respiratory chain complex III"/>
    <property type="evidence" value="ECO:0007669"/>
    <property type="project" value="InterPro"/>
</dbReference>
<dbReference type="GO" id="GO:0046872">
    <property type="term" value="F:metal ion binding"/>
    <property type="evidence" value="ECO:0007669"/>
    <property type="project" value="UniProtKB-KW"/>
</dbReference>
<dbReference type="GO" id="GO:0008121">
    <property type="term" value="F:ubiquinol-cytochrome-c reductase activity"/>
    <property type="evidence" value="ECO:0007669"/>
    <property type="project" value="InterPro"/>
</dbReference>
<dbReference type="GO" id="GO:0006122">
    <property type="term" value="P:mitochondrial electron transport, ubiquinol to cytochrome c"/>
    <property type="evidence" value="ECO:0007669"/>
    <property type="project" value="TreeGrafter"/>
</dbReference>
<dbReference type="CDD" id="cd00290">
    <property type="entry name" value="cytochrome_b_C"/>
    <property type="match status" value="1"/>
</dbReference>
<dbReference type="CDD" id="cd00284">
    <property type="entry name" value="Cytochrome_b_N"/>
    <property type="match status" value="1"/>
</dbReference>
<dbReference type="FunFam" id="1.20.810.10:FF:000002">
    <property type="entry name" value="Cytochrome b"/>
    <property type="match status" value="1"/>
</dbReference>
<dbReference type="Gene3D" id="1.20.810.10">
    <property type="entry name" value="Cytochrome Bc1 Complex, Chain C"/>
    <property type="match status" value="1"/>
</dbReference>
<dbReference type="InterPro" id="IPR005798">
    <property type="entry name" value="Cyt_b/b6_C"/>
</dbReference>
<dbReference type="InterPro" id="IPR036150">
    <property type="entry name" value="Cyt_b/b6_C_sf"/>
</dbReference>
<dbReference type="InterPro" id="IPR005797">
    <property type="entry name" value="Cyt_b/b6_N"/>
</dbReference>
<dbReference type="InterPro" id="IPR027387">
    <property type="entry name" value="Cytb/b6-like_sf"/>
</dbReference>
<dbReference type="InterPro" id="IPR030689">
    <property type="entry name" value="Cytochrome_b"/>
</dbReference>
<dbReference type="InterPro" id="IPR048260">
    <property type="entry name" value="Cytochrome_b_C_euk/bac"/>
</dbReference>
<dbReference type="InterPro" id="IPR048259">
    <property type="entry name" value="Cytochrome_b_N_euk/bac"/>
</dbReference>
<dbReference type="InterPro" id="IPR016174">
    <property type="entry name" value="Di-haem_cyt_TM"/>
</dbReference>
<dbReference type="PANTHER" id="PTHR19271">
    <property type="entry name" value="CYTOCHROME B"/>
    <property type="match status" value="1"/>
</dbReference>
<dbReference type="PANTHER" id="PTHR19271:SF16">
    <property type="entry name" value="CYTOCHROME B"/>
    <property type="match status" value="1"/>
</dbReference>
<dbReference type="Pfam" id="PF00032">
    <property type="entry name" value="Cytochrom_B_C"/>
    <property type="match status" value="1"/>
</dbReference>
<dbReference type="Pfam" id="PF00033">
    <property type="entry name" value="Cytochrome_B"/>
    <property type="match status" value="1"/>
</dbReference>
<dbReference type="PIRSF" id="PIRSF038885">
    <property type="entry name" value="COB"/>
    <property type="match status" value="1"/>
</dbReference>
<dbReference type="SUPFAM" id="SSF81648">
    <property type="entry name" value="a domain/subunit of cytochrome bc1 complex (Ubiquinol-cytochrome c reductase)"/>
    <property type="match status" value="1"/>
</dbReference>
<dbReference type="SUPFAM" id="SSF81342">
    <property type="entry name" value="Transmembrane di-heme cytochromes"/>
    <property type="match status" value="1"/>
</dbReference>
<dbReference type="PROSITE" id="PS51003">
    <property type="entry name" value="CYTB_CTER"/>
    <property type="match status" value="1"/>
</dbReference>
<dbReference type="PROSITE" id="PS51002">
    <property type="entry name" value="CYTB_NTER"/>
    <property type="match status" value="1"/>
</dbReference>
<accession>Q33697</accession>
<keyword id="KW-0249">Electron transport</keyword>
<keyword id="KW-0349">Heme</keyword>
<keyword id="KW-0408">Iron</keyword>
<keyword id="KW-0472">Membrane</keyword>
<keyword id="KW-0479">Metal-binding</keyword>
<keyword id="KW-0496">Mitochondrion</keyword>
<keyword id="KW-0999">Mitochondrion inner membrane</keyword>
<keyword id="KW-0679">Respiratory chain</keyword>
<keyword id="KW-0812">Transmembrane</keyword>
<keyword id="KW-1133">Transmembrane helix</keyword>
<keyword id="KW-0813">Transport</keyword>
<keyword id="KW-0830">Ubiquinone</keyword>
<geneLocation type="mitochondrion"/>
<protein>
    <recommendedName>
        <fullName>Cytochrome b</fullName>
    </recommendedName>
    <alternativeName>
        <fullName>Complex III subunit 3</fullName>
    </alternativeName>
    <alternativeName>
        <fullName>Complex III subunit III</fullName>
    </alternativeName>
    <alternativeName>
        <fullName>Cytochrome b-c1 complex subunit 3</fullName>
    </alternativeName>
    <alternativeName>
        <fullName>Ubiquinol-cytochrome-c reductase complex cytochrome b subunit</fullName>
    </alternativeName>
</protein>
<feature type="chain" id="PRO_0000060618" description="Cytochrome b">
    <location>
        <begin position="1"/>
        <end position="379"/>
    </location>
</feature>
<feature type="transmembrane region" description="Helical" evidence="2">
    <location>
        <begin position="33"/>
        <end position="53"/>
    </location>
</feature>
<feature type="transmembrane region" description="Helical" evidence="2">
    <location>
        <begin position="77"/>
        <end position="98"/>
    </location>
</feature>
<feature type="transmembrane region" description="Helical" evidence="2">
    <location>
        <begin position="113"/>
        <end position="133"/>
    </location>
</feature>
<feature type="transmembrane region" description="Helical" evidence="2">
    <location>
        <begin position="178"/>
        <end position="198"/>
    </location>
</feature>
<feature type="transmembrane region" description="Helical" evidence="2">
    <location>
        <begin position="226"/>
        <end position="246"/>
    </location>
</feature>
<feature type="transmembrane region" description="Helical" evidence="2">
    <location>
        <begin position="288"/>
        <end position="308"/>
    </location>
</feature>
<feature type="transmembrane region" description="Helical" evidence="2">
    <location>
        <begin position="320"/>
        <end position="340"/>
    </location>
</feature>
<feature type="transmembrane region" description="Helical" evidence="2">
    <location>
        <begin position="347"/>
        <end position="367"/>
    </location>
</feature>
<feature type="binding site" description="axial binding residue" evidence="2">
    <location>
        <position position="83"/>
    </location>
    <ligand>
        <name>heme b</name>
        <dbReference type="ChEBI" id="CHEBI:60344"/>
        <label>b562</label>
    </ligand>
    <ligandPart>
        <name>Fe</name>
        <dbReference type="ChEBI" id="CHEBI:18248"/>
    </ligandPart>
</feature>
<feature type="binding site" description="axial binding residue" evidence="2">
    <location>
        <position position="97"/>
    </location>
    <ligand>
        <name>heme b</name>
        <dbReference type="ChEBI" id="CHEBI:60344"/>
        <label>b566</label>
    </ligand>
    <ligandPart>
        <name>Fe</name>
        <dbReference type="ChEBI" id="CHEBI:18248"/>
    </ligandPart>
</feature>
<feature type="binding site" description="axial binding residue" evidence="2">
    <location>
        <position position="182"/>
    </location>
    <ligand>
        <name>heme b</name>
        <dbReference type="ChEBI" id="CHEBI:60344"/>
        <label>b562</label>
    </ligand>
    <ligandPart>
        <name>Fe</name>
        <dbReference type="ChEBI" id="CHEBI:18248"/>
    </ligandPart>
</feature>
<feature type="binding site" description="axial binding residue" evidence="2">
    <location>
        <position position="196"/>
    </location>
    <ligand>
        <name>heme b</name>
        <dbReference type="ChEBI" id="CHEBI:60344"/>
        <label>b566</label>
    </ligand>
    <ligandPart>
        <name>Fe</name>
        <dbReference type="ChEBI" id="CHEBI:18248"/>
    </ligandPart>
</feature>
<feature type="binding site" evidence="2">
    <location>
        <position position="201"/>
    </location>
    <ligand>
        <name>a ubiquinone</name>
        <dbReference type="ChEBI" id="CHEBI:16389"/>
    </ligand>
</feature>
<proteinExistence type="inferred from homology"/>